<feature type="chain" id="PRO_0000232552" description="Flotillin-like protein FloA">
    <location>
        <begin position="1"/>
        <end position="314"/>
    </location>
</feature>
<feature type="transmembrane region" description="Helical" evidence="1">
    <location>
        <begin position="4"/>
        <end position="24"/>
    </location>
</feature>
<accession>Q7AP31</accession>
<organism>
    <name type="scientific">Listeria innocua serovar 6a (strain ATCC BAA-680 / CLIP 11262)</name>
    <dbReference type="NCBI Taxonomy" id="272626"/>
    <lineage>
        <taxon>Bacteria</taxon>
        <taxon>Bacillati</taxon>
        <taxon>Bacillota</taxon>
        <taxon>Bacilli</taxon>
        <taxon>Bacillales</taxon>
        <taxon>Listeriaceae</taxon>
        <taxon>Listeria</taxon>
    </lineage>
</organism>
<sequence>MTMIGPIIIAVLIIIFLIVFFTLVPVGLWISALSARVPVGLGTLIGMRLRRVVPSRVVKPLIKAVKAGLDLEVNQLESHYLAGGDVDNTVDALIAAHRANIELDFSRAAAIDLAGRDVLEAVQTSVTPKVIRTPEFTGVAQNGVEVKVITQITVQSNIERIVGGAGEDTVIARVGEAVVSTVGETREHTDVLENPNSISKKVQEQGLGDGTAYTILSIDIAEMRIGDNIKAKLDIEKANADMEVAQAAASKRKAEAIALEQENRAAVVAAEAEVPRALSRALEEGNLGVMDYYKMENVQSDTAMRESIAHEDEK</sequence>
<gene>
    <name evidence="1" type="primary">floA</name>
    <name type="ordered locus">lin0410</name>
</gene>
<keyword id="KW-1003">Cell membrane</keyword>
<keyword id="KW-0472">Membrane</keyword>
<keyword id="KW-0812">Transmembrane</keyword>
<keyword id="KW-1133">Transmembrane helix</keyword>
<dbReference type="EMBL" id="AL596164">
    <property type="protein sequence ID" value="CAC95643.1"/>
    <property type="molecule type" value="Genomic_DNA"/>
</dbReference>
<dbReference type="PIR" id="AC1484">
    <property type="entry name" value="AC1484"/>
</dbReference>
<dbReference type="RefSeq" id="WP_003723104.1">
    <property type="nucleotide sequence ID" value="NC_003212.1"/>
</dbReference>
<dbReference type="STRING" id="272626.gene:17564737"/>
<dbReference type="GeneID" id="93233861"/>
<dbReference type="KEGG" id="lin:lin0410"/>
<dbReference type="eggNOG" id="COG4864">
    <property type="taxonomic scope" value="Bacteria"/>
</dbReference>
<dbReference type="HOGENOM" id="CLU_836378_0_0_9"/>
<dbReference type="OrthoDB" id="9808365at2"/>
<dbReference type="Proteomes" id="UP000002513">
    <property type="component" value="Chromosome"/>
</dbReference>
<dbReference type="GO" id="GO:0045121">
    <property type="term" value="C:membrane raft"/>
    <property type="evidence" value="ECO:0007669"/>
    <property type="project" value="UniProtKB-SubCell"/>
</dbReference>
<dbReference type="GO" id="GO:0005886">
    <property type="term" value="C:plasma membrane"/>
    <property type="evidence" value="ECO:0007669"/>
    <property type="project" value="UniProtKB-SubCell"/>
</dbReference>
<dbReference type="HAMAP" id="MF_01562">
    <property type="entry name" value="FloA"/>
    <property type="match status" value="1"/>
</dbReference>
<dbReference type="InterPro" id="IPR022853">
    <property type="entry name" value="FloA"/>
</dbReference>
<dbReference type="NCBIfam" id="NF010186">
    <property type="entry name" value="PRK13665.1"/>
    <property type="match status" value="1"/>
</dbReference>
<dbReference type="Pfam" id="PF12127">
    <property type="entry name" value="FloA"/>
    <property type="match status" value="1"/>
</dbReference>
<evidence type="ECO:0000255" key="1">
    <source>
        <dbReference type="HAMAP-Rule" id="MF_01562"/>
    </source>
</evidence>
<comment type="function">
    <text evidence="1">Found in functional membrane microdomains (FMM) that may be equivalent to eukaryotic membrane rafts. FMMs are highly dynamic and increase in number as cells age. Flotillins are thought to be important factors in membrane fluidity.</text>
</comment>
<comment type="subunit">
    <text evidence="1">Homooligomerizes.</text>
</comment>
<comment type="subcellular location">
    <subcellularLocation>
        <location evidence="1">Cell membrane</location>
        <topology evidence="1">Single-pass membrane protein</topology>
    </subcellularLocation>
    <subcellularLocation>
        <location evidence="1">Membrane raft</location>
        <topology evidence="1">Single-pass membrane protein</topology>
    </subcellularLocation>
</comment>
<comment type="similarity">
    <text evidence="1">Belongs to the flotillin-like FloA family.</text>
</comment>
<proteinExistence type="inferred from homology"/>
<name>FLOA_LISIN</name>
<protein>
    <recommendedName>
        <fullName evidence="1">Flotillin-like protein FloA</fullName>
    </recommendedName>
</protein>
<reference key="1">
    <citation type="journal article" date="2001" name="Science">
        <title>Comparative genomics of Listeria species.</title>
        <authorList>
            <person name="Glaser P."/>
            <person name="Frangeul L."/>
            <person name="Buchrieser C."/>
            <person name="Rusniok C."/>
            <person name="Amend A."/>
            <person name="Baquero F."/>
            <person name="Berche P."/>
            <person name="Bloecker H."/>
            <person name="Brandt P."/>
            <person name="Chakraborty T."/>
            <person name="Charbit A."/>
            <person name="Chetouani F."/>
            <person name="Couve E."/>
            <person name="de Daruvar A."/>
            <person name="Dehoux P."/>
            <person name="Domann E."/>
            <person name="Dominguez-Bernal G."/>
            <person name="Duchaud E."/>
            <person name="Durant L."/>
            <person name="Dussurget O."/>
            <person name="Entian K.-D."/>
            <person name="Fsihi H."/>
            <person name="Garcia-del Portillo F."/>
            <person name="Garrido P."/>
            <person name="Gautier L."/>
            <person name="Goebel W."/>
            <person name="Gomez-Lopez N."/>
            <person name="Hain T."/>
            <person name="Hauf J."/>
            <person name="Jackson D."/>
            <person name="Jones L.-M."/>
            <person name="Kaerst U."/>
            <person name="Kreft J."/>
            <person name="Kuhn M."/>
            <person name="Kunst F."/>
            <person name="Kurapkat G."/>
            <person name="Madueno E."/>
            <person name="Maitournam A."/>
            <person name="Mata Vicente J."/>
            <person name="Ng E."/>
            <person name="Nedjari H."/>
            <person name="Nordsiek G."/>
            <person name="Novella S."/>
            <person name="de Pablos B."/>
            <person name="Perez-Diaz J.-C."/>
            <person name="Purcell R."/>
            <person name="Remmel B."/>
            <person name="Rose M."/>
            <person name="Schlueter T."/>
            <person name="Simoes N."/>
            <person name="Tierrez A."/>
            <person name="Vazquez-Boland J.-A."/>
            <person name="Voss H."/>
            <person name="Wehland J."/>
            <person name="Cossart P."/>
        </authorList>
    </citation>
    <scope>NUCLEOTIDE SEQUENCE [LARGE SCALE GENOMIC DNA]</scope>
    <source>
        <strain>ATCC BAA-680 / CLIP 11262</strain>
    </source>
</reference>